<sequence length="53" mass="6083">MPITDPVKLQIVYNRVLNKKVCRKCGALNPPTATKCRRCKSKNLRPKKGFKLK</sequence>
<organism>
    <name type="scientific">Staphylothermus marinus (strain ATCC 43588 / DSM 3639 / JCM 9404 / F1)</name>
    <dbReference type="NCBI Taxonomy" id="399550"/>
    <lineage>
        <taxon>Archaea</taxon>
        <taxon>Thermoproteota</taxon>
        <taxon>Thermoprotei</taxon>
        <taxon>Desulfurococcales</taxon>
        <taxon>Desulfurococcaceae</taxon>
        <taxon>Staphylothermus</taxon>
    </lineage>
</organism>
<protein>
    <recommendedName>
        <fullName evidence="1">Large ribosomal subunit protein eL40</fullName>
    </recommendedName>
    <alternativeName>
        <fullName evidence="2">50S ribosomal protein L40e</fullName>
    </alternativeName>
</protein>
<proteinExistence type="inferred from homology"/>
<gene>
    <name evidence="1" type="primary">rpl40e</name>
    <name type="ordered locus">Smar_0686</name>
</gene>
<dbReference type="EMBL" id="CP000575">
    <property type="protein sequence ID" value="ABN69790.1"/>
    <property type="molecule type" value="Genomic_DNA"/>
</dbReference>
<dbReference type="RefSeq" id="WP_011838981.1">
    <property type="nucleotide sequence ID" value="NC_009033.1"/>
</dbReference>
<dbReference type="SMR" id="A3DMD0"/>
<dbReference type="STRING" id="399550.Smar_0686"/>
<dbReference type="GeneID" id="4907617"/>
<dbReference type="KEGG" id="smr:Smar_0686"/>
<dbReference type="eggNOG" id="arCOG04049">
    <property type="taxonomic scope" value="Archaea"/>
</dbReference>
<dbReference type="HOGENOM" id="CLU_175093_1_0_2"/>
<dbReference type="OrthoDB" id="45138at2157"/>
<dbReference type="Proteomes" id="UP000000254">
    <property type="component" value="Chromosome"/>
</dbReference>
<dbReference type="GO" id="GO:1990904">
    <property type="term" value="C:ribonucleoprotein complex"/>
    <property type="evidence" value="ECO:0007669"/>
    <property type="project" value="UniProtKB-KW"/>
</dbReference>
<dbReference type="GO" id="GO:0005840">
    <property type="term" value="C:ribosome"/>
    <property type="evidence" value="ECO:0007669"/>
    <property type="project" value="UniProtKB-KW"/>
</dbReference>
<dbReference type="GO" id="GO:0003735">
    <property type="term" value="F:structural constituent of ribosome"/>
    <property type="evidence" value="ECO:0007669"/>
    <property type="project" value="InterPro"/>
</dbReference>
<dbReference type="GO" id="GO:0006412">
    <property type="term" value="P:translation"/>
    <property type="evidence" value="ECO:0007669"/>
    <property type="project" value="UniProtKB-UniRule"/>
</dbReference>
<dbReference type="Gene3D" id="4.10.1060.50">
    <property type="match status" value="1"/>
</dbReference>
<dbReference type="HAMAP" id="MF_00788">
    <property type="entry name" value="Ribosomal_eL40"/>
    <property type="match status" value="1"/>
</dbReference>
<dbReference type="InterPro" id="IPR023657">
    <property type="entry name" value="Ribosomal_eL40_arc"/>
</dbReference>
<dbReference type="InterPro" id="IPR001975">
    <property type="entry name" value="Ribosomal_eL40_dom"/>
</dbReference>
<dbReference type="InterPro" id="IPR038587">
    <property type="entry name" value="Ribosomal_eL40_sf"/>
</dbReference>
<dbReference type="InterPro" id="IPR011332">
    <property type="entry name" value="Ribosomal_zn-bd"/>
</dbReference>
<dbReference type="NCBIfam" id="NF003161">
    <property type="entry name" value="PRK04136.1"/>
    <property type="match status" value="1"/>
</dbReference>
<dbReference type="PANTHER" id="PTHR39649">
    <property type="entry name" value="50S RIBOSOMAL PROTEIN L40E"/>
    <property type="match status" value="1"/>
</dbReference>
<dbReference type="PANTHER" id="PTHR39649:SF1">
    <property type="entry name" value="LARGE RIBOSOMAL SUBUNIT PROTEIN EL40"/>
    <property type="match status" value="1"/>
</dbReference>
<dbReference type="Pfam" id="PF01020">
    <property type="entry name" value="Ribosomal_L40e"/>
    <property type="match status" value="1"/>
</dbReference>
<dbReference type="SMART" id="SM01377">
    <property type="entry name" value="Ribosomal_L40e"/>
    <property type="match status" value="1"/>
</dbReference>
<dbReference type="SUPFAM" id="SSF57829">
    <property type="entry name" value="Zn-binding ribosomal proteins"/>
    <property type="match status" value="1"/>
</dbReference>
<evidence type="ECO:0000255" key="1">
    <source>
        <dbReference type="HAMAP-Rule" id="MF_00788"/>
    </source>
</evidence>
<evidence type="ECO:0000305" key="2"/>
<keyword id="KW-1185">Reference proteome</keyword>
<keyword id="KW-0687">Ribonucleoprotein</keyword>
<keyword id="KW-0689">Ribosomal protein</keyword>
<comment type="similarity">
    <text evidence="1">Belongs to the eukaryotic ribosomal protein eL40 family.</text>
</comment>
<feature type="chain" id="PRO_1000046894" description="Large ribosomal subunit protein eL40">
    <location>
        <begin position="1"/>
        <end position="53"/>
    </location>
</feature>
<name>RL40_STAMF</name>
<accession>A3DMD0</accession>
<reference key="1">
    <citation type="journal article" date="2009" name="BMC Genomics">
        <title>The complete genome sequence of Staphylothermus marinus reveals differences in sulfur metabolism among heterotrophic Crenarchaeota.</title>
        <authorList>
            <person name="Anderson I.J."/>
            <person name="Dharmarajan L."/>
            <person name="Rodriguez J."/>
            <person name="Hooper S."/>
            <person name="Porat I."/>
            <person name="Ulrich L.E."/>
            <person name="Elkins J.G."/>
            <person name="Mavromatis K."/>
            <person name="Sun H."/>
            <person name="Land M."/>
            <person name="Lapidus A."/>
            <person name="Lucas S."/>
            <person name="Barry K."/>
            <person name="Huber H."/>
            <person name="Zhulin I.B."/>
            <person name="Whitman W.B."/>
            <person name="Mukhopadhyay B."/>
            <person name="Woese C."/>
            <person name="Bristow J."/>
            <person name="Kyrpides N."/>
        </authorList>
    </citation>
    <scope>NUCLEOTIDE SEQUENCE [LARGE SCALE GENOMIC DNA]</scope>
    <source>
        <strain>ATCC 43588 / DSM 3639 / JCM 9404 / F1</strain>
    </source>
</reference>
<reference key="2">
    <citation type="journal article" date="2009" name="Stand. Genomic Sci.">
        <title>Complete genome sequence of Staphylothermus marinus Stetter and Fiala 1986 type strain F1.</title>
        <authorList>
            <person name="Anderson I.J."/>
            <person name="Sun H."/>
            <person name="Lapidus A."/>
            <person name="Copeland A."/>
            <person name="Glavina Del Rio T."/>
            <person name="Tice H."/>
            <person name="Dalin E."/>
            <person name="Lucas S."/>
            <person name="Barry K."/>
            <person name="Land M."/>
            <person name="Richardson P."/>
            <person name="Huber H."/>
            <person name="Kyrpides N.C."/>
        </authorList>
    </citation>
    <scope>NUCLEOTIDE SEQUENCE [LARGE SCALE GENOMIC DNA]</scope>
    <source>
        <strain>ATCC 43588 / DSM 3639 / JCM 9404 / F1</strain>
    </source>
</reference>